<accession>P79237</accession>
<proteinExistence type="inferred from homology"/>
<gene>
    <name type="primary">FPR3</name>
    <name type="synonym">FPRL2</name>
</gene>
<feature type="chain" id="PRO_0000069460" description="N-formyl peptide receptor 3">
    <location>
        <begin position="1"/>
        <end position="349" status="greater than"/>
    </location>
</feature>
<feature type="topological domain" description="Extracellular" evidence="1">
    <location>
        <begin position="1"/>
        <end position="27"/>
    </location>
</feature>
<feature type="transmembrane region" description="Helical; Name=1" evidence="1">
    <location>
        <begin position="28"/>
        <end position="50"/>
    </location>
</feature>
<feature type="topological domain" description="Cytoplasmic" evidence="1">
    <location>
        <begin position="51"/>
        <end position="61"/>
    </location>
</feature>
<feature type="transmembrane region" description="Helical; Name=2" evidence="1">
    <location>
        <begin position="62"/>
        <end position="83"/>
    </location>
</feature>
<feature type="topological domain" description="Extracellular" evidence="1">
    <location>
        <begin position="84"/>
        <end position="100"/>
    </location>
</feature>
<feature type="transmembrane region" description="Helical; Name=3" evidence="1">
    <location>
        <begin position="101"/>
        <end position="121"/>
    </location>
</feature>
<feature type="topological domain" description="Cytoplasmic" evidence="1">
    <location>
        <begin position="122"/>
        <end position="140"/>
    </location>
</feature>
<feature type="transmembrane region" description="Helical; Name=4" evidence="1">
    <location>
        <begin position="141"/>
        <end position="162"/>
    </location>
</feature>
<feature type="topological domain" description="Extracellular" evidence="1">
    <location>
        <begin position="163"/>
        <end position="205"/>
    </location>
</feature>
<feature type="transmembrane region" description="Helical; Name=5" evidence="1">
    <location>
        <begin position="206"/>
        <end position="226"/>
    </location>
</feature>
<feature type="topological domain" description="Cytoplasmic" evidence="1">
    <location>
        <begin position="227"/>
        <end position="242"/>
    </location>
</feature>
<feature type="transmembrane region" description="Helical; Name=6" evidence="1">
    <location>
        <begin position="243"/>
        <end position="266"/>
    </location>
</feature>
<feature type="topological domain" description="Extracellular" evidence="1">
    <location>
        <begin position="267"/>
        <end position="286"/>
    </location>
</feature>
<feature type="transmembrane region" description="Helical; Name=7" evidence="1">
    <location>
        <begin position="287"/>
        <end position="306"/>
    </location>
</feature>
<feature type="topological domain" description="Cytoplasmic" evidence="1">
    <location>
        <begin position="307"/>
        <end position="349" status="greater than"/>
    </location>
</feature>
<feature type="region of interest" description="Disordered" evidence="3">
    <location>
        <begin position="328"/>
        <end position="349"/>
    </location>
</feature>
<feature type="compositionally biased region" description="Polar residues" evidence="3">
    <location>
        <begin position="331"/>
        <end position="343"/>
    </location>
</feature>
<feature type="glycosylation site" description="N-linked (GlcNAc...) asparagine" evidence="1">
    <location>
        <position position="4"/>
    </location>
</feature>
<feature type="glycosylation site" description="N-linked (GlcNAc...) asparagine" evidence="1">
    <location>
        <position position="10"/>
    </location>
</feature>
<feature type="disulfide bond" evidence="2">
    <location>
        <begin position="98"/>
        <end position="176"/>
    </location>
</feature>
<feature type="non-terminal residue">
    <location>
        <position position="349"/>
    </location>
</feature>
<keyword id="KW-1003">Cell membrane</keyword>
<keyword id="KW-0145">Chemotaxis</keyword>
<keyword id="KW-1015">Disulfide bond</keyword>
<keyword id="KW-0297">G-protein coupled receptor</keyword>
<keyword id="KW-0325">Glycoprotein</keyword>
<keyword id="KW-0472">Membrane</keyword>
<keyword id="KW-0675">Receptor</keyword>
<keyword id="KW-0807">Transducer</keyword>
<keyword id="KW-0812">Transmembrane</keyword>
<keyword id="KW-1133">Transmembrane helix</keyword>
<dbReference type="EMBL" id="X97741">
    <property type="protein sequence ID" value="CAA66325.1"/>
    <property type="molecule type" value="Genomic_DNA"/>
</dbReference>
<dbReference type="SMR" id="P79237"/>
<dbReference type="GlyCosmos" id="P79237">
    <property type="glycosylation" value="2 sites, No reported glycans"/>
</dbReference>
<dbReference type="GO" id="GO:0005886">
    <property type="term" value="C:plasma membrane"/>
    <property type="evidence" value="ECO:0007669"/>
    <property type="project" value="UniProtKB-SubCell"/>
</dbReference>
<dbReference type="GO" id="GO:0004875">
    <property type="term" value="F:complement receptor activity"/>
    <property type="evidence" value="ECO:0007669"/>
    <property type="project" value="TreeGrafter"/>
</dbReference>
<dbReference type="GO" id="GO:0004982">
    <property type="term" value="F:N-formyl peptide receptor activity"/>
    <property type="evidence" value="ECO:0007669"/>
    <property type="project" value="TreeGrafter"/>
</dbReference>
<dbReference type="GO" id="GO:0006935">
    <property type="term" value="P:chemotaxis"/>
    <property type="evidence" value="ECO:0007669"/>
    <property type="project" value="UniProtKB-KW"/>
</dbReference>
<dbReference type="GO" id="GO:0006954">
    <property type="term" value="P:inflammatory response"/>
    <property type="evidence" value="ECO:0007669"/>
    <property type="project" value="TreeGrafter"/>
</dbReference>
<dbReference type="GO" id="GO:0007200">
    <property type="term" value="P:phospholipase C-activating G protein-coupled receptor signaling pathway"/>
    <property type="evidence" value="ECO:0007669"/>
    <property type="project" value="TreeGrafter"/>
</dbReference>
<dbReference type="GO" id="GO:0007204">
    <property type="term" value="P:positive regulation of cytosolic calcium ion concentration"/>
    <property type="evidence" value="ECO:0007669"/>
    <property type="project" value="TreeGrafter"/>
</dbReference>
<dbReference type="FunFam" id="1.20.1070.10:FF:000034">
    <property type="entry name" value="G-protein coupled receptor 1"/>
    <property type="match status" value="1"/>
</dbReference>
<dbReference type="Gene3D" id="1.20.1070.10">
    <property type="entry name" value="Rhodopsin 7-helix transmembrane proteins"/>
    <property type="match status" value="1"/>
</dbReference>
<dbReference type="InterPro" id="IPR000826">
    <property type="entry name" value="Formyl_rcpt-rel"/>
</dbReference>
<dbReference type="InterPro" id="IPR000276">
    <property type="entry name" value="GPCR_Rhodpsn"/>
</dbReference>
<dbReference type="InterPro" id="IPR017452">
    <property type="entry name" value="GPCR_Rhodpsn_7TM"/>
</dbReference>
<dbReference type="PANTHER" id="PTHR24225:SF58">
    <property type="match status" value="1"/>
</dbReference>
<dbReference type="PANTHER" id="PTHR24225">
    <property type="entry name" value="CHEMOTACTIC RECEPTOR"/>
    <property type="match status" value="1"/>
</dbReference>
<dbReference type="Pfam" id="PF00001">
    <property type="entry name" value="7tm_1"/>
    <property type="match status" value="1"/>
</dbReference>
<dbReference type="PRINTS" id="PR00526">
    <property type="entry name" value="FMETLEUPHER"/>
</dbReference>
<dbReference type="PRINTS" id="PR00237">
    <property type="entry name" value="GPCRRHODOPSN"/>
</dbReference>
<dbReference type="SUPFAM" id="SSF81321">
    <property type="entry name" value="Family A G protein-coupled receptor-like"/>
    <property type="match status" value="1"/>
</dbReference>
<dbReference type="PROSITE" id="PS00237">
    <property type="entry name" value="G_PROTEIN_RECEP_F1_1"/>
    <property type="match status" value="1"/>
</dbReference>
<dbReference type="PROSITE" id="PS50262">
    <property type="entry name" value="G_PROTEIN_RECEP_F1_2"/>
    <property type="match status" value="1"/>
</dbReference>
<name>FPR3_PONPY</name>
<protein>
    <recommendedName>
        <fullName>N-formyl peptide receptor 3</fullName>
    </recommendedName>
    <alternativeName>
        <fullName>FMLP-related receptor II</fullName>
        <shortName>FMLP-R-II</shortName>
    </alternativeName>
    <alternativeName>
        <fullName>Formyl peptide receptor-like 2</fullName>
    </alternativeName>
</protein>
<reference key="1">
    <citation type="journal article" date="1996" name="Immunogenetics">
        <title>Molecular evolution of the N-formyl peptide and C5a receptors in non-human primates.</title>
        <authorList>
            <person name="Alvarez V."/>
            <person name="Coto E."/>
            <person name="Sehen F."/>
            <person name="Gouzalek-Koces S."/>
            <person name="Lopez-Larrea C."/>
        </authorList>
    </citation>
    <scope>NUCLEOTIDE SEQUENCE [GENOMIC DNA]</scope>
</reference>
<evidence type="ECO:0000255" key="1"/>
<evidence type="ECO:0000255" key="2">
    <source>
        <dbReference type="PROSITE-ProRule" id="PRU00521"/>
    </source>
</evidence>
<evidence type="ECO:0000256" key="3">
    <source>
        <dbReference type="SAM" id="MobiDB-lite"/>
    </source>
</evidence>
<sequence length="349" mass="39424">METNFSIPLNESEEVLPEPAGHTVLWIFSLLVHGVTFIFGVLGNGLVIWVAGFRMTRTVNTICYLNLALADFSFSAILPFRMVSVAMREKWPFGTFLCKLVHVMIDINLFVSVYLITIIALDRCICVLHPAWAQNHRTMSLAKRVMMGLWILAIVLTLPNFIFWTTISTKNGDTYCIFNFPFWGDTAVERLNAFITMGKVFLILHFIIGFSMPMSIITVCYGIIAAKIHRNHMIKSSSPLRVFAAVVASFFICWFPYELIGILMAVWLKEMLLNGKYKIILVLLNPTSSLAFFNSCLNPILYVFLGSNFQERLIRSLPTSLERALTEVPDSAQTSNTHTNSASPPEETE</sequence>
<organism>
    <name type="scientific">Pongo pygmaeus</name>
    <name type="common">Bornean orangutan</name>
    <dbReference type="NCBI Taxonomy" id="9600"/>
    <lineage>
        <taxon>Eukaryota</taxon>
        <taxon>Metazoa</taxon>
        <taxon>Chordata</taxon>
        <taxon>Craniata</taxon>
        <taxon>Vertebrata</taxon>
        <taxon>Euteleostomi</taxon>
        <taxon>Mammalia</taxon>
        <taxon>Eutheria</taxon>
        <taxon>Euarchontoglires</taxon>
        <taxon>Primates</taxon>
        <taxon>Haplorrhini</taxon>
        <taxon>Catarrhini</taxon>
        <taxon>Hominidae</taxon>
        <taxon>Pongo</taxon>
    </lineage>
</organism>
<comment type="function">
    <text>Low affinity receptor for N-formyl-methionyl peptides, which are powerful neutrophils chemotactic factors. Binding of FMLP to the receptor causes activation of neutrophils. This response is mediated via a G-protein that activates a phosphatidylinositol-calcium second messenger system.</text>
</comment>
<comment type="subcellular location">
    <subcellularLocation>
        <location>Cell membrane</location>
        <topology>Multi-pass membrane protein</topology>
    </subcellularLocation>
</comment>
<comment type="similarity">
    <text evidence="2">Belongs to the G-protein coupled receptor 1 family.</text>
</comment>